<evidence type="ECO:0000255" key="1">
    <source>
        <dbReference type="HAMAP-Rule" id="MF_01428"/>
    </source>
</evidence>
<evidence type="ECO:0000305" key="2"/>
<feature type="chain" id="PRO_0000208339" description="Glutamyl-Q tRNA(Asp) synthetase">
    <location>
        <begin position="1"/>
        <end position="321"/>
    </location>
</feature>
<feature type="short sequence motif" description="'HIGH' region">
    <location>
        <begin position="28"/>
        <end position="38"/>
    </location>
</feature>
<feature type="short sequence motif" description="'KMSKS' region">
    <location>
        <begin position="244"/>
        <end position="248"/>
    </location>
</feature>
<feature type="binding site" evidence="1">
    <location>
        <begin position="25"/>
        <end position="29"/>
    </location>
    <ligand>
        <name>L-glutamate</name>
        <dbReference type="ChEBI" id="CHEBI:29985"/>
    </ligand>
</feature>
<feature type="binding site" evidence="1">
    <location>
        <position position="61"/>
    </location>
    <ligand>
        <name>L-glutamate</name>
        <dbReference type="ChEBI" id="CHEBI:29985"/>
    </ligand>
</feature>
<feature type="binding site" evidence="1">
    <location>
        <position position="117"/>
    </location>
    <ligand>
        <name>Zn(2+)</name>
        <dbReference type="ChEBI" id="CHEBI:29105"/>
    </ligand>
</feature>
<feature type="binding site" evidence="1">
    <location>
        <position position="119"/>
    </location>
    <ligand>
        <name>Zn(2+)</name>
        <dbReference type="ChEBI" id="CHEBI:29105"/>
    </ligand>
</feature>
<feature type="binding site" evidence="1">
    <location>
        <position position="131"/>
    </location>
    <ligand>
        <name>Zn(2+)</name>
        <dbReference type="ChEBI" id="CHEBI:29105"/>
    </ligand>
</feature>
<feature type="binding site" evidence="1">
    <location>
        <position position="135"/>
    </location>
    <ligand>
        <name>Zn(2+)</name>
        <dbReference type="ChEBI" id="CHEBI:29105"/>
    </ligand>
</feature>
<feature type="binding site" evidence="1">
    <location>
        <position position="188"/>
    </location>
    <ligand>
        <name>L-glutamate</name>
        <dbReference type="ChEBI" id="CHEBI:29985"/>
    </ligand>
</feature>
<feature type="binding site" evidence="1">
    <location>
        <position position="206"/>
    </location>
    <ligand>
        <name>L-glutamate</name>
        <dbReference type="ChEBI" id="CHEBI:29985"/>
    </ligand>
</feature>
<feature type="binding site" evidence="1">
    <location>
        <position position="247"/>
    </location>
    <ligand>
        <name>ATP</name>
        <dbReference type="ChEBI" id="CHEBI:30616"/>
    </ligand>
</feature>
<organism>
    <name type="scientific">Yersinia pestis</name>
    <dbReference type="NCBI Taxonomy" id="632"/>
    <lineage>
        <taxon>Bacteria</taxon>
        <taxon>Pseudomonadati</taxon>
        <taxon>Pseudomonadota</taxon>
        <taxon>Gammaproteobacteria</taxon>
        <taxon>Enterobacterales</taxon>
        <taxon>Yersiniaceae</taxon>
        <taxon>Yersinia</taxon>
    </lineage>
</organism>
<comment type="function">
    <text evidence="1">Catalyzes the tRNA-independent activation of glutamate in presence of ATP and the subsequent transfer of glutamate onto a tRNA(Asp). Glutamate is transferred on the 2-amino-5-(4,5-dihydroxy-2-cyclopenten-1-yl) moiety of the queuosine in the wobble position of the QUC anticodon.</text>
</comment>
<comment type="cofactor">
    <cofactor evidence="1">
        <name>Zn(2+)</name>
        <dbReference type="ChEBI" id="CHEBI:29105"/>
    </cofactor>
    <text evidence="1">Binds 1 zinc ion per subunit.</text>
</comment>
<comment type="similarity">
    <text evidence="1">Belongs to the class-I aminoacyl-tRNA synthetase family. GluQ subfamily.</text>
</comment>
<comment type="sequence caution" evidence="2">
    <conflict type="erroneous initiation">
        <sequence resource="EMBL-CDS" id="AAM84376"/>
    </conflict>
</comment>
<comment type="sequence caution" evidence="2">
    <conflict type="erroneous initiation">
        <sequence resource="EMBL-CDS" id="AAS60562"/>
    </conflict>
</comment>
<sequence length="321" mass="36310">MVQQAVIQRSANQRATNQPTEYIGRFAPSPSGDLHFGSLIAALGSYLQARAQGGKWLVRIEDIDPPREVPGAASRILAALEHYGLHWDGPVIYQSQRHEAYRATLNWLEQQGLSYYCTCTRSRIHQLGGFYDGYCRDRHLPASGAAIRLRQTQPVYAFYDKLLGELHAHPALAQEDFIIRRRDGLFAYNLAVVVDDAFQGVTEIVRGADLIEPTVRQIALYQQLQHPVPGYIHLPLALNNQGNKLSKQNHAPPLPNGDPRPILIDALKFLRQPLPEYWQDLDLYLLLRYAVKHWTLVSIPLQGAITPQKTQRHSQSKYGEL</sequence>
<protein>
    <recommendedName>
        <fullName evidence="1">Glutamyl-Q tRNA(Asp) synthetase</fullName>
        <shortName evidence="1">Glu-Q-RSs</shortName>
        <ecNumber evidence="1">6.1.1.-</ecNumber>
    </recommendedName>
</protein>
<keyword id="KW-0030">Aminoacyl-tRNA synthetase</keyword>
<keyword id="KW-0067">ATP-binding</keyword>
<keyword id="KW-0436">Ligase</keyword>
<keyword id="KW-0479">Metal-binding</keyword>
<keyword id="KW-0547">Nucleotide-binding</keyword>
<keyword id="KW-1185">Reference proteome</keyword>
<keyword id="KW-0862">Zinc</keyword>
<name>GLUQ_YERPE</name>
<accession>Q8ZBL1</accession>
<accession>Q0WBP8</accession>
<accession>Q74XU5</accession>
<accession>Q8D1A9</accession>
<proteinExistence type="inferred from homology"/>
<dbReference type="EC" id="6.1.1.-" evidence="1"/>
<dbReference type="EMBL" id="AL590842">
    <property type="protein sequence ID" value="CAL21987.1"/>
    <property type="molecule type" value="Genomic_DNA"/>
</dbReference>
<dbReference type="EMBL" id="AE009952">
    <property type="protein sequence ID" value="AAM84376.1"/>
    <property type="status" value="ALT_INIT"/>
    <property type="molecule type" value="Genomic_DNA"/>
</dbReference>
<dbReference type="EMBL" id="AE017042">
    <property type="protein sequence ID" value="AAS60562.1"/>
    <property type="status" value="ALT_INIT"/>
    <property type="molecule type" value="Genomic_DNA"/>
</dbReference>
<dbReference type="PIR" id="AH0412">
    <property type="entry name" value="AH0412"/>
</dbReference>
<dbReference type="RefSeq" id="YP_002348290.1">
    <property type="nucleotide sequence ID" value="NC_003143.1"/>
</dbReference>
<dbReference type="SMR" id="Q8ZBL1"/>
<dbReference type="STRING" id="214092.YPO3398"/>
<dbReference type="PaxDb" id="214092-YPO3398"/>
<dbReference type="EnsemblBacteria" id="AAS60562">
    <property type="protein sequence ID" value="AAS60562"/>
    <property type="gene ID" value="YP_0287"/>
</dbReference>
<dbReference type="KEGG" id="ype:YPO3398"/>
<dbReference type="KEGG" id="ypk:y0789"/>
<dbReference type="KEGG" id="ypm:YP_0287"/>
<dbReference type="PATRIC" id="fig|1028802.3.peg.1608"/>
<dbReference type="eggNOG" id="COG0008">
    <property type="taxonomic scope" value="Bacteria"/>
</dbReference>
<dbReference type="HOGENOM" id="CLU_015768_0_1_6"/>
<dbReference type="OrthoDB" id="9807503at2"/>
<dbReference type="Proteomes" id="UP000000815">
    <property type="component" value="Chromosome"/>
</dbReference>
<dbReference type="Proteomes" id="UP000001019">
    <property type="component" value="Chromosome"/>
</dbReference>
<dbReference type="Proteomes" id="UP000002490">
    <property type="component" value="Chromosome"/>
</dbReference>
<dbReference type="GO" id="GO:0005829">
    <property type="term" value="C:cytosol"/>
    <property type="evidence" value="ECO:0000318"/>
    <property type="project" value="GO_Central"/>
</dbReference>
<dbReference type="GO" id="GO:0005524">
    <property type="term" value="F:ATP binding"/>
    <property type="evidence" value="ECO:0007669"/>
    <property type="project" value="UniProtKB-KW"/>
</dbReference>
<dbReference type="GO" id="GO:0004818">
    <property type="term" value="F:glutamate-tRNA ligase activity"/>
    <property type="evidence" value="ECO:0000318"/>
    <property type="project" value="GO_Central"/>
</dbReference>
<dbReference type="GO" id="GO:0008270">
    <property type="term" value="F:zinc ion binding"/>
    <property type="evidence" value="ECO:0007669"/>
    <property type="project" value="UniProtKB-UniRule"/>
</dbReference>
<dbReference type="GO" id="GO:0006424">
    <property type="term" value="P:glutamyl-tRNA aminoacylation"/>
    <property type="evidence" value="ECO:0000318"/>
    <property type="project" value="GO_Central"/>
</dbReference>
<dbReference type="GO" id="GO:0006400">
    <property type="term" value="P:tRNA modification"/>
    <property type="evidence" value="ECO:0007669"/>
    <property type="project" value="InterPro"/>
</dbReference>
<dbReference type="FunFam" id="3.40.50.620:FF:000093">
    <property type="entry name" value="Glutamyl-Q tRNA(Asp) synthetase"/>
    <property type="match status" value="1"/>
</dbReference>
<dbReference type="Gene3D" id="3.40.50.620">
    <property type="entry name" value="HUPs"/>
    <property type="match status" value="1"/>
</dbReference>
<dbReference type="HAMAP" id="MF_01428">
    <property type="entry name" value="Glu_Q_tRNA_synth"/>
    <property type="match status" value="1"/>
</dbReference>
<dbReference type="InterPro" id="IPR022380">
    <property type="entry name" value="Glu-Q_tRNA(Asp)_Synthase"/>
</dbReference>
<dbReference type="InterPro" id="IPR000924">
    <property type="entry name" value="Glu/Gln-tRNA-synth"/>
</dbReference>
<dbReference type="InterPro" id="IPR020058">
    <property type="entry name" value="Glu/Gln-tRNA-synth_Ib_cat-dom"/>
</dbReference>
<dbReference type="InterPro" id="IPR049940">
    <property type="entry name" value="GluQ/Sye"/>
</dbReference>
<dbReference type="InterPro" id="IPR014729">
    <property type="entry name" value="Rossmann-like_a/b/a_fold"/>
</dbReference>
<dbReference type="NCBIfam" id="NF004312">
    <property type="entry name" value="PRK05710.1-1"/>
    <property type="match status" value="1"/>
</dbReference>
<dbReference type="NCBIfam" id="NF004314">
    <property type="entry name" value="PRK05710.1-3"/>
    <property type="match status" value="1"/>
</dbReference>
<dbReference type="NCBIfam" id="TIGR03838">
    <property type="entry name" value="queuosine_YadB"/>
    <property type="match status" value="1"/>
</dbReference>
<dbReference type="PANTHER" id="PTHR43311">
    <property type="entry name" value="GLUTAMATE--TRNA LIGASE"/>
    <property type="match status" value="1"/>
</dbReference>
<dbReference type="PANTHER" id="PTHR43311:SF1">
    <property type="entry name" value="GLUTAMYL-Q TRNA(ASP) SYNTHETASE"/>
    <property type="match status" value="1"/>
</dbReference>
<dbReference type="Pfam" id="PF00749">
    <property type="entry name" value="tRNA-synt_1c"/>
    <property type="match status" value="1"/>
</dbReference>
<dbReference type="PRINTS" id="PR00987">
    <property type="entry name" value="TRNASYNTHGLU"/>
</dbReference>
<dbReference type="SUPFAM" id="SSF52374">
    <property type="entry name" value="Nucleotidylyl transferase"/>
    <property type="match status" value="1"/>
</dbReference>
<reference key="1">
    <citation type="journal article" date="2001" name="Nature">
        <title>Genome sequence of Yersinia pestis, the causative agent of plague.</title>
        <authorList>
            <person name="Parkhill J."/>
            <person name="Wren B.W."/>
            <person name="Thomson N.R."/>
            <person name="Titball R.W."/>
            <person name="Holden M.T.G."/>
            <person name="Prentice M.B."/>
            <person name="Sebaihia M."/>
            <person name="James K.D."/>
            <person name="Churcher C.M."/>
            <person name="Mungall K.L."/>
            <person name="Baker S."/>
            <person name="Basham D."/>
            <person name="Bentley S.D."/>
            <person name="Brooks K."/>
            <person name="Cerdeno-Tarraga A.-M."/>
            <person name="Chillingworth T."/>
            <person name="Cronin A."/>
            <person name="Davies R.M."/>
            <person name="Davis P."/>
            <person name="Dougan G."/>
            <person name="Feltwell T."/>
            <person name="Hamlin N."/>
            <person name="Holroyd S."/>
            <person name="Jagels K."/>
            <person name="Karlyshev A.V."/>
            <person name="Leather S."/>
            <person name="Moule S."/>
            <person name="Oyston P.C.F."/>
            <person name="Quail M.A."/>
            <person name="Rutherford K.M."/>
            <person name="Simmonds M."/>
            <person name="Skelton J."/>
            <person name="Stevens K."/>
            <person name="Whitehead S."/>
            <person name="Barrell B.G."/>
        </authorList>
    </citation>
    <scope>NUCLEOTIDE SEQUENCE [LARGE SCALE GENOMIC DNA]</scope>
    <source>
        <strain>CO-92 / Biovar Orientalis</strain>
    </source>
</reference>
<reference key="2">
    <citation type="journal article" date="2002" name="J. Bacteriol.">
        <title>Genome sequence of Yersinia pestis KIM.</title>
        <authorList>
            <person name="Deng W."/>
            <person name="Burland V."/>
            <person name="Plunkett G. III"/>
            <person name="Boutin A."/>
            <person name="Mayhew G.F."/>
            <person name="Liss P."/>
            <person name="Perna N.T."/>
            <person name="Rose D.J."/>
            <person name="Mau B."/>
            <person name="Zhou S."/>
            <person name="Schwartz D.C."/>
            <person name="Fetherston J.D."/>
            <person name="Lindler L.E."/>
            <person name="Brubaker R.R."/>
            <person name="Plano G.V."/>
            <person name="Straley S.C."/>
            <person name="McDonough K.A."/>
            <person name="Nilles M.L."/>
            <person name="Matson J.S."/>
            <person name="Blattner F.R."/>
            <person name="Perry R.D."/>
        </authorList>
    </citation>
    <scope>NUCLEOTIDE SEQUENCE [LARGE SCALE GENOMIC DNA]</scope>
    <source>
        <strain>KIM10+ / Biovar Mediaevalis</strain>
    </source>
</reference>
<reference key="3">
    <citation type="journal article" date="2004" name="DNA Res.">
        <title>Complete genome sequence of Yersinia pestis strain 91001, an isolate avirulent to humans.</title>
        <authorList>
            <person name="Song Y."/>
            <person name="Tong Z."/>
            <person name="Wang J."/>
            <person name="Wang L."/>
            <person name="Guo Z."/>
            <person name="Han Y."/>
            <person name="Zhang J."/>
            <person name="Pei D."/>
            <person name="Zhou D."/>
            <person name="Qin H."/>
            <person name="Pang X."/>
            <person name="Han Y."/>
            <person name="Zhai J."/>
            <person name="Li M."/>
            <person name="Cui B."/>
            <person name="Qi Z."/>
            <person name="Jin L."/>
            <person name="Dai R."/>
            <person name="Chen F."/>
            <person name="Li S."/>
            <person name="Ye C."/>
            <person name="Du Z."/>
            <person name="Lin W."/>
            <person name="Wang J."/>
            <person name="Yu J."/>
            <person name="Yang H."/>
            <person name="Wang J."/>
            <person name="Huang P."/>
            <person name="Yang R."/>
        </authorList>
    </citation>
    <scope>NUCLEOTIDE SEQUENCE [LARGE SCALE GENOMIC DNA]</scope>
    <source>
        <strain>91001 / Biovar Mediaevalis</strain>
    </source>
</reference>
<gene>
    <name evidence="1" type="primary">gluQ</name>
    <name type="ordered locus">YPO3398</name>
    <name type="ordered locus">y0789</name>
    <name type="ordered locus">YP_0287</name>
</gene>